<organism>
    <name type="scientific">Thermobifida fusca (strain YX)</name>
    <dbReference type="NCBI Taxonomy" id="269800"/>
    <lineage>
        <taxon>Bacteria</taxon>
        <taxon>Bacillati</taxon>
        <taxon>Actinomycetota</taxon>
        <taxon>Actinomycetes</taxon>
        <taxon>Streptosporangiales</taxon>
        <taxon>Nocardiopsidaceae</taxon>
        <taxon>Thermobifida</taxon>
    </lineage>
</organism>
<protein>
    <recommendedName>
        <fullName evidence="1">Exodeoxyribonuclease 7 large subunit</fullName>
        <ecNumber evidence="1">3.1.11.6</ecNumber>
    </recommendedName>
    <alternativeName>
        <fullName evidence="1">Exodeoxyribonuclease VII large subunit</fullName>
        <shortName evidence="1">Exonuclease VII large subunit</shortName>
    </alternativeName>
</protein>
<reference key="1">
    <citation type="journal article" date="2007" name="J. Bacteriol.">
        <title>Genome sequence and analysis of the soil cellulolytic actinomycete Thermobifida fusca YX.</title>
        <authorList>
            <person name="Lykidis A."/>
            <person name="Mavromatis K."/>
            <person name="Ivanova N."/>
            <person name="Anderson I."/>
            <person name="Land M."/>
            <person name="DiBartolo G."/>
            <person name="Martinez M."/>
            <person name="Lapidus A."/>
            <person name="Lucas S."/>
            <person name="Copeland A."/>
            <person name="Richardson P."/>
            <person name="Wilson D.B."/>
            <person name="Kyrpides N."/>
        </authorList>
    </citation>
    <scope>NUCLEOTIDE SEQUENCE [LARGE SCALE GENOMIC DNA]</scope>
    <source>
        <strain>YX</strain>
    </source>
</reference>
<keyword id="KW-0963">Cytoplasm</keyword>
<keyword id="KW-0269">Exonuclease</keyword>
<keyword id="KW-0378">Hydrolase</keyword>
<keyword id="KW-0540">Nuclease</keyword>
<feature type="chain" id="PRO_0000303832" description="Exodeoxyribonuclease 7 large subunit">
    <location>
        <begin position="1"/>
        <end position="406"/>
    </location>
</feature>
<sequence>MGMESSPESPQPVRVVLQAVGGWIGRLGRIWIEGQVAELHRRGGMAYITLRDPVANVSARVTCSIRVLRAADPPPEQGARVVVYAKPDFYVPRGTFSFQALEIRHVGLGELLARLERLRQALAAEGLFAESRKRKLPFLPGVVGLICGRDSAAERDVLENARRRWPAVRFEVREVAVQGDRAVPEVMAALEELDAHPEVDVIIIARGGGSLEDLLPFSDEALVRAVAAARTPVVSAIGHEQDTPLLDYVADLRASTPTDAAKKVVPDVGEQWELIRQLRDRARRVLEGGIAREEAWLASMRSRPVLANPVQEVERKIEQVFDLRDRGRRALTAALDRAGDNLAHIRARLHALSPATTLARGYAIVRRADGTVVRSAAEVAPGEELRLRFAEDGLVAIAQNREEDEL</sequence>
<comment type="function">
    <text evidence="1">Bidirectionally degrades single-stranded DNA into large acid-insoluble oligonucleotides, which are then degraded further into small acid-soluble oligonucleotides.</text>
</comment>
<comment type="catalytic activity">
    <reaction evidence="1">
        <text>Exonucleolytic cleavage in either 5'- to 3'- or 3'- to 5'-direction to yield nucleoside 5'-phosphates.</text>
        <dbReference type="EC" id="3.1.11.6"/>
    </reaction>
</comment>
<comment type="subunit">
    <text evidence="1">Heterooligomer composed of large and small subunits.</text>
</comment>
<comment type="subcellular location">
    <subcellularLocation>
        <location evidence="1">Cytoplasm</location>
    </subcellularLocation>
</comment>
<comment type="similarity">
    <text evidence="1">Belongs to the XseA family.</text>
</comment>
<gene>
    <name evidence="1" type="primary">xseA</name>
    <name type="ordered locus">Tfu_0468</name>
</gene>
<dbReference type="EC" id="3.1.11.6" evidence="1"/>
<dbReference type="EMBL" id="CP000088">
    <property type="protein sequence ID" value="AAZ54506.1"/>
    <property type="molecule type" value="Genomic_DNA"/>
</dbReference>
<dbReference type="RefSeq" id="WP_011290915.1">
    <property type="nucleotide sequence ID" value="NC_007333.1"/>
</dbReference>
<dbReference type="SMR" id="Q47SR1"/>
<dbReference type="STRING" id="269800.Tfu_0468"/>
<dbReference type="KEGG" id="tfu:Tfu_0468"/>
<dbReference type="eggNOG" id="COG1570">
    <property type="taxonomic scope" value="Bacteria"/>
</dbReference>
<dbReference type="HOGENOM" id="CLU_023625_2_1_11"/>
<dbReference type="OrthoDB" id="9802795at2"/>
<dbReference type="GO" id="GO:0005737">
    <property type="term" value="C:cytoplasm"/>
    <property type="evidence" value="ECO:0007669"/>
    <property type="project" value="UniProtKB-SubCell"/>
</dbReference>
<dbReference type="GO" id="GO:0009318">
    <property type="term" value="C:exodeoxyribonuclease VII complex"/>
    <property type="evidence" value="ECO:0007669"/>
    <property type="project" value="InterPro"/>
</dbReference>
<dbReference type="GO" id="GO:0008855">
    <property type="term" value="F:exodeoxyribonuclease VII activity"/>
    <property type="evidence" value="ECO:0007669"/>
    <property type="project" value="UniProtKB-UniRule"/>
</dbReference>
<dbReference type="GO" id="GO:0003676">
    <property type="term" value="F:nucleic acid binding"/>
    <property type="evidence" value="ECO:0007669"/>
    <property type="project" value="InterPro"/>
</dbReference>
<dbReference type="GO" id="GO:0006308">
    <property type="term" value="P:DNA catabolic process"/>
    <property type="evidence" value="ECO:0007669"/>
    <property type="project" value="UniProtKB-UniRule"/>
</dbReference>
<dbReference type="CDD" id="cd04489">
    <property type="entry name" value="ExoVII_LU_OBF"/>
    <property type="match status" value="1"/>
</dbReference>
<dbReference type="HAMAP" id="MF_00378">
    <property type="entry name" value="Exonuc_7_L"/>
    <property type="match status" value="1"/>
</dbReference>
<dbReference type="InterPro" id="IPR003753">
    <property type="entry name" value="Exonuc_VII_L"/>
</dbReference>
<dbReference type="InterPro" id="IPR020579">
    <property type="entry name" value="Exonuc_VII_lsu_C"/>
</dbReference>
<dbReference type="InterPro" id="IPR025824">
    <property type="entry name" value="OB-fold_nuc-bd_dom"/>
</dbReference>
<dbReference type="NCBIfam" id="TIGR00237">
    <property type="entry name" value="xseA"/>
    <property type="match status" value="1"/>
</dbReference>
<dbReference type="PANTHER" id="PTHR30008">
    <property type="entry name" value="EXODEOXYRIBONUCLEASE 7 LARGE SUBUNIT"/>
    <property type="match status" value="1"/>
</dbReference>
<dbReference type="PANTHER" id="PTHR30008:SF0">
    <property type="entry name" value="EXODEOXYRIBONUCLEASE 7 LARGE SUBUNIT"/>
    <property type="match status" value="1"/>
</dbReference>
<dbReference type="Pfam" id="PF02601">
    <property type="entry name" value="Exonuc_VII_L"/>
    <property type="match status" value="2"/>
</dbReference>
<dbReference type="Pfam" id="PF13742">
    <property type="entry name" value="tRNA_anti_2"/>
    <property type="match status" value="1"/>
</dbReference>
<proteinExistence type="inferred from homology"/>
<name>EX7L_THEFY</name>
<accession>Q47SR1</accession>
<evidence type="ECO:0000255" key="1">
    <source>
        <dbReference type="HAMAP-Rule" id="MF_00378"/>
    </source>
</evidence>